<organismHost>
    <name type="scientific">Acanthamoeba polyphaga</name>
    <name type="common">Amoeba</name>
    <dbReference type="NCBI Taxonomy" id="5757"/>
</organismHost>
<name>YR549_MIMIV</name>
<reference key="1">
    <citation type="journal article" date="2004" name="Science">
        <title>The 1.2-megabase genome sequence of Mimivirus.</title>
        <authorList>
            <person name="Raoult D."/>
            <person name="Audic S."/>
            <person name="Robert C."/>
            <person name="Abergel C."/>
            <person name="Renesto P."/>
            <person name="Ogata H."/>
            <person name="La Scola B."/>
            <person name="Susan M."/>
            <person name="Claverie J.-M."/>
        </authorList>
    </citation>
    <scope>NUCLEOTIDE SEQUENCE [LARGE SCALE GENOMIC DNA]</scope>
    <source>
        <strain>Rowbotham-Bradford</strain>
    </source>
</reference>
<dbReference type="EMBL" id="AY653733">
    <property type="protein sequence ID" value="AAV50813.1"/>
    <property type="molecule type" value="Genomic_DNA"/>
</dbReference>
<dbReference type="KEGG" id="vg:9925184"/>
<dbReference type="OrthoDB" id="25937at10239"/>
<dbReference type="Proteomes" id="UP000001134">
    <property type="component" value="Genome"/>
</dbReference>
<gene>
    <name type="ordered locus">MIMI_R549</name>
</gene>
<sequence>MSNPCLTMNITKDNLKFFVLNGKYILESNNDMMFAINTKRIIADKYDFGIIINSSIYNKYLQNIGCPLYSPTEIFNYYQLIVNHQFTQADGKLFEDRIKFIFVNLETICDRSNYTDFVSWYLTVIDDIDNYKNVFIVINELNVQDDIDSENMDDLDDMDHYVSNFLNLLLATVNKNTYVLSSDSEYFAHVSLYGKISCDESLNMILCGNIFDNSDCKYFLTNGTSYKFFNGYFVIHRSDNLSGFVGITKDSKNINIDYHYLNMLTVSQIVVHSVIRLLEGYKSSDKKNEVDLYLLRSYHSYIEQNGLISIYKNNLANKNIRSYFLKCKVIDDVMIELTNLLE</sequence>
<protein>
    <recommendedName>
        <fullName>Uncharacterized protein R549</fullName>
    </recommendedName>
</protein>
<keyword id="KW-1185">Reference proteome</keyword>
<accession>Q5UR28</accession>
<organism>
    <name type="scientific">Acanthamoeba polyphaga mimivirus</name>
    <name type="common">APMV</name>
    <dbReference type="NCBI Taxonomy" id="212035"/>
    <lineage>
        <taxon>Viruses</taxon>
        <taxon>Varidnaviria</taxon>
        <taxon>Bamfordvirae</taxon>
        <taxon>Nucleocytoviricota</taxon>
        <taxon>Megaviricetes</taxon>
        <taxon>Imitervirales</taxon>
        <taxon>Mimiviridae</taxon>
        <taxon>Megamimivirinae</taxon>
        <taxon>Mimivirus</taxon>
        <taxon>Mimivirus bradfordmassiliense</taxon>
    </lineage>
</organism>
<proteinExistence type="predicted"/>
<feature type="chain" id="PRO_0000071291" description="Uncharacterized protein R549">
    <location>
        <begin position="1"/>
        <end position="342"/>
    </location>
</feature>